<organism>
    <name type="scientific">Lacticaseibacillus paracasei (strain ATCC 334 / BCRC 17002 / CCUG 31169 / CIP 107868 / KCTC 3260 / NRRL B-441)</name>
    <name type="common">Lactobacillus paracasei</name>
    <dbReference type="NCBI Taxonomy" id="321967"/>
    <lineage>
        <taxon>Bacteria</taxon>
        <taxon>Bacillati</taxon>
        <taxon>Bacillota</taxon>
        <taxon>Bacilli</taxon>
        <taxon>Lactobacillales</taxon>
        <taxon>Lactobacillaceae</taxon>
        <taxon>Lacticaseibacillus</taxon>
    </lineage>
</organism>
<feature type="chain" id="PRO_1000077563" description="NH(3)-dependent NAD(+) synthetase">
    <location>
        <begin position="1"/>
        <end position="275"/>
    </location>
</feature>
<feature type="binding site" evidence="1">
    <location>
        <begin position="47"/>
        <end position="54"/>
    </location>
    <ligand>
        <name>ATP</name>
        <dbReference type="ChEBI" id="CHEBI:30616"/>
    </ligand>
</feature>
<feature type="binding site" evidence="1">
    <location>
        <position position="53"/>
    </location>
    <ligand>
        <name>Mg(2+)</name>
        <dbReference type="ChEBI" id="CHEBI:18420"/>
    </ligand>
</feature>
<feature type="binding site" evidence="1">
    <location>
        <position position="141"/>
    </location>
    <ligand>
        <name>deamido-NAD(+)</name>
        <dbReference type="ChEBI" id="CHEBI:58437"/>
    </ligand>
</feature>
<feature type="binding site" evidence="1">
    <location>
        <position position="161"/>
    </location>
    <ligand>
        <name>ATP</name>
        <dbReference type="ChEBI" id="CHEBI:30616"/>
    </ligand>
</feature>
<feature type="binding site" evidence="1">
    <location>
        <position position="166"/>
    </location>
    <ligand>
        <name>Mg(2+)</name>
        <dbReference type="ChEBI" id="CHEBI:18420"/>
    </ligand>
</feature>
<feature type="binding site" evidence="1">
    <location>
        <position position="174"/>
    </location>
    <ligand>
        <name>deamido-NAD(+)</name>
        <dbReference type="ChEBI" id="CHEBI:58437"/>
    </ligand>
</feature>
<feature type="binding site" evidence="1">
    <location>
        <position position="181"/>
    </location>
    <ligand>
        <name>deamido-NAD(+)</name>
        <dbReference type="ChEBI" id="CHEBI:58437"/>
    </ligand>
</feature>
<feature type="binding site" evidence="1">
    <location>
        <position position="190"/>
    </location>
    <ligand>
        <name>ATP</name>
        <dbReference type="ChEBI" id="CHEBI:30616"/>
    </ligand>
</feature>
<feature type="binding site" evidence="1">
    <location>
        <position position="212"/>
    </location>
    <ligand>
        <name>ATP</name>
        <dbReference type="ChEBI" id="CHEBI:30616"/>
    </ligand>
</feature>
<feature type="binding site" evidence="1">
    <location>
        <begin position="261"/>
        <end position="262"/>
    </location>
    <ligand>
        <name>deamido-NAD(+)</name>
        <dbReference type="ChEBI" id="CHEBI:58437"/>
    </ligand>
</feature>
<gene>
    <name evidence="1" type="primary">nadE</name>
    <name type="ordered locus">LSEI_1804</name>
</gene>
<dbReference type="EC" id="6.3.1.5" evidence="1"/>
<dbReference type="EMBL" id="CP000423">
    <property type="protein sequence ID" value="ABJ70574.1"/>
    <property type="molecule type" value="Genomic_DNA"/>
</dbReference>
<dbReference type="RefSeq" id="WP_003660553.1">
    <property type="nucleotide sequence ID" value="NC_008526.1"/>
</dbReference>
<dbReference type="RefSeq" id="YP_807016.1">
    <property type="nucleotide sequence ID" value="NC_008526.1"/>
</dbReference>
<dbReference type="SMR" id="Q037P8"/>
<dbReference type="STRING" id="321967.LSEI_1804"/>
<dbReference type="PaxDb" id="321967-LSEI_1804"/>
<dbReference type="KEGG" id="lca:LSEI_1804"/>
<dbReference type="PATRIC" id="fig|321967.11.peg.1783"/>
<dbReference type="HOGENOM" id="CLU_059327_3_0_9"/>
<dbReference type="UniPathway" id="UPA00253">
    <property type="reaction ID" value="UER00333"/>
</dbReference>
<dbReference type="Proteomes" id="UP000001651">
    <property type="component" value="Chromosome"/>
</dbReference>
<dbReference type="GO" id="GO:0005737">
    <property type="term" value="C:cytoplasm"/>
    <property type="evidence" value="ECO:0007669"/>
    <property type="project" value="InterPro"/>
</dbReference>
<dbReference type="GO" id="GO:0005524">
    <property type="term" value="F:ATP binding"/>
    <property type="evidence" value="ECO:0007669"/>
    <property type="project" value="UniProtKB-UniRule"/>
</dbReference>
<dbReference type="GO" id="GO:0004359">
    <property type="term" value="F:glutaminase activity"/>
    <property type="evidence" value="ECO:0007669"/>
    <property type="project" value="InterPro"/>
</dbReference>
<dbReference type="GO" id="GO:0046872">
    <property type="term" value="F:metal ion binding"/>
    <property type="evidence" value="ECO:0007669"/>
    <property type="project" value="UniProtKB-KW"/>
</dbReference>
<dbReference type="GO" id="GO:0003952">
    <property type="term" value="F:NAD+ synthase (glutamine-hydrolyzing) activity"/>
    <property type="evidence" value="ECO:0007669"/>
    <property type="project" value="InterPro"/>
</dbReference>
<dbReference type="GO" id="GO:0008795">
    <property type="term" value="F:NAD+ synthase activity"/>
    <property type="evidence" value="ECO:0007669"/>
    <property type="project" value="UniProtKB-UniRule"/>
</dbReference>
<dbReference type="GO" id="GO:0009435">
    <property type="term" value="P:NAD biosynthetic process"/>
    <property type="evidence" value="ECO:0007669"/>
    <property type="project" value="UniProtKB-UniRule"/>
</dbReference>
<dbReference type="CDD" id="cd00553">
    <property type="entry name" value="NAD_synthase"/>
    <property type="match status" value="1"/>
</dbReference>
<dbReference type="FunFam" id="3.40.50.620:FF:000015">
    <property type="entry name" value="NH(3)-dependent NAD(+) synthetase"/>
    <property type="match status" value="1"/>
</dbReference>
<dbReference type="Gene3D" id="3.40.50.620">
    <property type="entry name" value="HUPs"/>
    <property type="match status" value="1"/>
</dbReference>
<dbReference type="HAMAP" id="MF_00193">
    <property type="entry name" value="NadE_ammonia_dep"/>
    <property type="match status" value="1"/>
</dbReference>
<dbReference type="InterPro" id="IPR022310">
    <property type="entry name" value="NAD/GMP_synthase"/>
</dbReference>
<dbReference type="InterPro" id="IPR003694">
    <property type="entry name" value="NAD_synthase"/>
</dbReference>
<dbReference type="InterPro" id="IPR022926">
    <property type="entry name" value="NH(3)-dep_NAD(+)_synth"/>
</dbReference>
<dbReference type="InterPro" id="IPR014729">
    <property type="entry name" value="Rossmann-like_a/b/a_fold"/>
</dbReference>
<dbReference type="NCBIfam" id="TIGR00552">
    <property type="entry name" value="nadE"/>
    <property type="match status" value="1"/>
</dbReference>
<dbReference type="NCBIfam" id="NF001979">
    <property type="entry name" value="PRK00768.1"/>
    <property type="match status" value="1"/>
</dbReference>
<dbReference type="PANTHER" id="PTHR23090">
    <property type="entry name" value="NH 3 /GLUTAMINE-DEPENDENT NAD + SYNTHETASE"/>
    <property type="match status" value="1"/>
</dbReference>
<dbReference type="PANTHER" id="PTHR23090:SF7">
    <property type="entry name" value="NH(3)-DEPENDENT NAD(+) SYNTHETASE"/>
    <property type="match status" value="1"/>
</dbReference>
<dbReference type="Pfam" id="PF02540">
    <property type="entry name" value="NAD_synthase"/>
    <property type="match status" value="1"/>
</dbReference>
<dbReference type="SUPFAM" id="SSF52402">
    <property type="entry name" value="Adenine nucleotide alpha hydrolases-like"/>
    <property type="match status" value="1"/>
</dbReference>
<evidence type="ECO:0000255" key="1">
    <source>
        <dbReference type="HAMAP-Rule" id="MF_00193"/>
    </source>
</evidence>
<comment type="function">
    <text evidence="1">Catalyzes the ATP-dependent amidation of deamido-NAD to form NAD. Uses ammonia as a nitrogen source.</text>
</comment>
<comment type="catalytic activity">
    <reaction evidence="1">
        <text>deamido-NAD(+) + NH4(+) + ATP = AMP + diphosphate + NAD(+) + H(+)</text>
        <dbReference type="Rhea" id="RHEA:21188"/>
        <dbReference type="ChEBI" id="CHEBI:15378"/>
        <dbReference type="ChEBI" id="CHEBI:28938"/>
        <dbReference type="ChEBI" id="CHEBI:30616"/>
        <dbReference type="ChEBI" id="CHEBI:33019"/>
        <dbReference type="ChEBI" id="CHEBI:57540"/>
        <dbReference type="ChEBI" id="CHEBI:58437"/>
        <dbReference type="ChEBI" id="CHEBI:456215"/>
        <dbReference type="EC" id="6.3.1.5"/>
    </reaction>
</comment>
<comment type="pathway">
    <text evidence="1">Cofactor biosynthesis; NAD(+) biosynthesis; NAD(+) from deamido-NAD(+) (ammonia route): step 1/1.</text>
</comment>
<comment type="subunit">
    <text evidence="1">Homodimer.</text>
</comment>
<comment type="similarity">
    <text evidence="1">Belongs to the NAD synthetase family.</text>
</comment>
<name>NADE_LACP3</name>
<protein>
    <recommendedName>
        <fullName evidence="1">NH(3)-dependent NAD(+) synthetase</fullName>
        <ecNumber evidence="1">6.3.1.5</ecNumber>
    </recommendedName>
</protein>
<keyword id="KW-0067">ATP-binding</keyword>
<keyword id="KW-0436">Ligase</keyword>
<keyword id="KW-0460">Magnesium</keyword>
<keyword id="KW-0479">Metal-binding</keyword>
<keyword id="KW-0520">NAD</keyword>
<keyword id="KW-0547">Nucleotide-binding</keyword>
<keyword id="KW-1185">Reference proteome</keyword>
<accession>Q037P8</accession>
<proteinExistence type="inferred from homology"/>
<sequence length="275" mass="30087">MRPLQAEIIKALGVQATIDPETEVRRSVDFLKAYLKKNTFLKTYVLGISGGQDSSLAGALTEKAMQEMRAETGDDAYQFIAVRLPYGEQADEADAMAAIDFMHADVVKRVNIKPSVDAMVAAVEADGSKISDFNKGNIKARMRMIAQYAIAGNNAGAVIGTDHAAEAVTGFYTKFGDGGADLTPLYRLDKRQGAALLKVLGAPAHLYEKAPTADLEDNRPALPDEVALGVKYKDIDDYLEGKDVTDQAAETIEKWYQKTAHKRHLPITVFDNFWK</sequence>
<reference key="1">
    <citation type="journal article" date="2006" name="Proc. Natl. Acad. Sci. U.S.A.">
        <title>Comparative genomics of the lactic acid bacteria.</title>
        <authorList>
            <person name="Makarova K.S."/>
            <person name="Slesarev A."/>
            <person name="Wolf Y.I."/>
            <person name="Sorokin A."/>
            <person name="Mirkin B."/>
            <person name="Koonin E.V."/>
            <person name="Pavlov A."/>
            <person name="Pavlova N."/>
            <person name="Karamychev V."/>
            <person name="Polouchine N."/>
            <person name="Shakhova V."/>
            <person name="Grigoriev I."/>
            <person name="Lou Y."/>
            <person name="Rohksar D."/>
            <person name="Lucas S."/>
            <person name="Huang K."/>
            <person name="Goodstein D.M."/>
            <person name="Hawkins T."/>
            <person name="Plengvidhya V."/>
            <person name="Welker D."/>
            <person name="Hughes J."/>
            <person name="Goh Y."/>
            <person name="Benson A."/>
            <person name="Baldwin K."/>
            <person name="Lee J.-H."/>
            <person name="Diaz-Muniz I."/>
            <person name="Dosti B."/>
            <person name="Smeianov V."/>
            <person name="Wechter W."/>
            <person name="Barabote R."/>
            <person name="Lorca G."/>
            <person name="Altermann E."/>
            <person name="Barrangou R."/>
            <person name="Ganesan B."/>
            <person name="Xie Y."/>
            <person name="Rawsthorne H."/>
            <person name="Tamir D."/>
            <person name="Parker C."/>
            <person name="Breidt F."/>
            <person name="Broadbent J.R."/>
            <person name="Hutkins R."/>
            <person name="O'Sullivan D."/>
            <person name="Steele J."/>
            <person name="Unlu G."/>
            <person name="Saier M.H. Jr."/>
            <person name="Klaenhammer T."/>
            <person name="Richardson P."/>
            <person name="Kozyavkin S."/>
            <person name="Weimer B.C."/>
            <person name="Mills D.A."/>
        </authorList>
    </citation>
    <scope>NUCLEOTIDE SEQUENCE [LARGE SCALE GENOMIC DNA]</scope>
    <source>
        <strain>ATCC 334 / BCRC 17002 / CCUG 31169 / CIP 107868 / KCTC 3260 / NRRL B-441</strain>
    </source>
</reference>